<dbReference type="EMBL" id="AF361342">
    <property type="protein sequence ID" value="AAL50037.1"/>
    <property type="molecule type" value="mRNA"/>
</dbReference>
<dbReference type="RefSeq" id="NP_542424.1">
    <property type="nucleotide sequence ID" value="NM_080693.3"/>
</dbReference>
<dbReference type="RefSeq" id="XP_017452463.1">
    <property type="nucleotide sequence ID" value="XM_017596974.1"/>
</dbReference>
<dbReference type="RefSeq" id="XP_038941020.1">
    <property type="nucleotide sequence ID" value="XM_039085092.2"/>
</dbReference>
<dbReference type="PDB" id="8SS2">
    <property type="method" value="EM"/>
    <property type="resolution" value="3.58 A"/>
    <property type="chains" value="A/B/C/D=4-207"/>
</dbReference>
<dbReference type="PDB" id="8SS3">
    <property type="method" value="EM"/>
    <property type="resolution" value="3.21 A"/>
    <property type="chains" value="A/B/C/D=4-207"/>
</dbReference>
<dbReference type="PDB" id="8SS4">
    <property type="method" value="EM"/>
    <property type="resolution" value="3.30 A"/>
    <property type="chains" value="A/B/C/D=4-207"/>
</dbReference>
<dbReference type="PDB" id="8SS5">
    <property type="method" value="EM"/>
    <property type="resolution" value="3.56 A"/>
    <property type="chains" value="A/B/C/D=4-207"/>
</dbReference>
<dbReference type="PDB" id="8SS6">
    <property type="method" value="EM"/>
    <property type="resolution" value="3.01 A"/>
    <property type="chains" value="A/B/C/D=4-207"/>
</dbReference>
<dbReference type="PDB" id="8SS7">
    <property type="method" value="EM"/>
    <property type="resolution" value="2.76 A"/>
    <property type="chains" value="A/B/C/D=4-207"/>
</dbReference>
<dbReference type="PDB" id="8SS8">
    <property type="method" value="EM"/>
    <property type="resolution" value="2.81 A"/>
    <property type="chains" value="A/B/C/D=4-207"/>
</dbReference>
<dbReference type="PDB" id="8SS9">
    <property type="method" value="EM"/>
    <property type="resolution" value="2.72 A"/>
    <property type="chains" value="A/B/C/D=4-207"/>
</dbReference>
<dbReference type="PDB" id="8SSA">
    <property type="method" value="EM"/>
    <property type="resolution" value="3.88 A"/>
    <property type="chains" value="A/B/C/D=4-207"/>
</dbReference>
<dbReference type="PDB" id="8SSB">
    <property type="method" value="EM"/>
    <property type="resolution" value="3.66 A"/>
    <property type="chains" value="A/B/C/D=4-207"/>
</dbReference>
<dbReference type="PDBsum" id="8SS2"/>
<dbReference type="PDBsum" id="8SS3"/>
<dbReference type="PDBsum" id="8SS4"/>
<dbReference type="PDBsum" id="8SS5"/>
<dbReference type="PDBsum" id="8SS6"/>
<dbReference type="PDBsum" id="8SS7"/>
<dbReference type="PDBsum" id="8SS8"/>
<dbReference type="PDBsum" id="8SS9"/>
<dbReference type="PDBsum" id="8SSA"/>
<dbReference type="PDBsum" id="8SSB"/>
<dbReference type="EMDB" id="EMD-40741"/>
<dbReference type="EMDB" id="EMD-40742"/>
<dbReference type="EMDB" id="EMD-40743"/>
<dbReference type="EMDB" id="EMD-40744"/>
<dbReference type="EMDB" id="EMD-40745"/>
<dbReference type="EMDB" id="EMD-40746"/>
<dbReference type="EMDB" id="EMD-40747"/>
<dbReference type="EMDB" id="EMD-40748"/>
<dbReference type="EMDB" id="EMD-40749"/>
<dbReference type="EMDB" id="EMD-40750"/>
<dbReference type="SMR" id="Q8VHW8"/>
<dbReference type="BioGRID" id="250842">
    <property type="interactions" value="2"/>
</dbReference>
<dbReference type="FunCoup" id="Q8VHW8">
    <property type="interactions" value="419"/>
</dbReference>
<dbReference type="STRING" id="10116.ENSRNOP00000004578"/>
<dbReference type="PhosphoSitePlus" id="Q8VHW8"/>
<dbReference type="PaxDb" id="10116-ENSRNOP00000004578"/>
<dbReference type="Ensembl" id="ENSRNOT00000004578.8">
    <property type="protein sequence ID" value="ENSRNOP00000004578.6"/>
    <property type="gene ID" value="ENSRNOG00000003288.8"/>
</dbReference>
<dbReference type="GeneID" id="140726"/>
<dbReference type="KEGG" id="rno:140726"/>
<dbReference type="UCSC" id="RGD:628805">
    <property type="organism name" value="rat"/>
</dbReference>
<dbReference type="AGR" id="RGD:628805"/>
<dbReference type="CTD" id="27091"/>
<dbReference type="RGD" id="628805">
    <property type="gene designation" value="Cacng5"/>
</dbReference>
<dbReference type="eggNOG" id="ENOG502QTQ7">
    <property type="taxonomic scope" value="Eukaryota"/>
</dbReference>
<dbReference type="GeneTree" id="ENSGT01050000244961"/>
<dbReference type="HOGENOM" id="CLU_053704_1_1_1"/>
<dbReference type="InParanoid" id="Q8VHW8"/>
<dbReference type="OMA" id="SESFFNY"/>
<dbReference type="OrthoDB" id="5917530at2759"/>
<dbReference type="PhylomeDB" id="Q8VHW8"/>
<dbReference type="PRO" id="PR:Q8VHW8"/>
<dbReference type="Proteomes" id="UP000002494">
    <property type="component" value="Chromosome 10"/>
</dbReference>
<dbReference type="Bgee" id="ENSRNOG00000003288">
    <property type="expression patterns" value="Expressed in adult mammalian kidney and 3 other cell types or tissues"/>
</dbReference>
<dbReference type="GO" id="GO:0032281">
    <property type="term" value="C:AMPA glutamate receptor complex"/>
    <property type="evidence" value="ECO:0000314"/>
    <property type="project" value="UniProtKB"/>
</dbReference>
<dbReference type="GO" id="GO:0098978">
    <property type="term" value="C:glutamatergic synapse"/>
    <property type="evidence" value="ECO:0000314"/>
    <property type="project" value="SynGO"/>
</dbReference>
<dbReference type="GO" id="GO:0014069">
    <property type="term" value="C:postsynaptic density"/>
    <property type="evidence" value="ECO:0000314"/>
    <property type="project" value="UniProtKB"/>
</dbReference>
<dbReference type="GO" id="GO:0098839">
    <property type="term" value="C:postsynaptic density membrane"/>
    <property type="evidence" value="ECO:0000318"/>
    <property type="project" value="GO_Central"/>
</dbReference>
<dbReference type="GO" id="GO:0045211">
    <property type="term" value="C:postsynaptic membrane"/>
    <property type="evidence" value="ECO:0000314"/>
    <property type="project" value="SynGO"/>
</dbReference>
<dbReference type="GO" id="GO:0016247">
    <property type="term" value="F:channel regulator activity"/>
    <property type="evidence" value="ECO:0000318"/>
    <property type="project" value="GO_Central"/>
</dbReference>
<dbReference type="GO" id="GO:0005245">
    <property type="term" value="F:voltage-gated calcium channel activity"/>
    <property type="evidence" value="ECO:0000318"/>
    <property type="project" value="GO_Central"/>
</dbReference>
<dbReference type="GO" id="GO:0051968">
    <property type="term" value="P:positive regulation of synaptic transmission, glutamatergic"/>
    <property type="evidence" value="ECO:0000318"/>
    <property type="project" value="GO_Central"/>
</dbReference>
<dbReference type="GO" id="GO:0098970">
    <property type="term" value="P:postsynaptic neurotransmitter receptor diffusion trapping"/>
    <property type="evidence" value="ECO:0000318"/>
    <property type="project" value="GO_Central"/>
</dbReference>
<dbReference type="GO" id="GO:2000311">
    <property type="term" value="P:regulation of AMPA receptor activity"/>
    <property type="evidence" value="ECO:0000314"/>
    <property type="project" value="UniProtKB"/>
</dbReference>
<dbReference type="GO" id="GO:0019226">
    <property type="term" value="P:transmission of nerve impulse"/>
    <property type="evidence" value="ECO:0000318"/>
    <property type="project" value="GO_Central"/>
</dbReference>
<dbReference type="FunFam" id="1.20.140.150:FF:000003">
    <property type="entry name" value="Voltage-dependent calcium channel gamma-7 subunit"/>
    <property type="match status" value="1"/>
</dbReference>
<dbReference type="Gene3D" id="1.20.140.150">
    <property type="match status" value="1"/>
</dbReference>
<dbReference type="InterPro" id="IPR051072">
    <property type="entry name" value="CACNG_subunit"/>
</dbReference>
<dbReference type="InterPro" id="IPR004031">
    <property type="entry name" value="PMP22/EMP/MP20/Claudin"/>
</dbReference>
<dbReference type="InterPro" id="IPR008369">
    <property type="entry name" value="VDCC_g5su"/>
</dbReference>
<dbReference type="InterPro" id="IPR008368">
    <property type="entry name" value="VDCC_gsu"/>
</dbReference>
<dbReference type="PANTHER" id="PTHR12107">
    <property type="entry name" value="VOLTAGE-DEPENDENT CALCIUM CHANNEL GAMMA SUBUNIT"/>
    <property type="match status" value="1"/>
</dbReference>
<dbReference type="PANTHER" id="PTHR12107:SF4">
    <property type="entry name" value="VOLTAGE-DEPENDENT CALCIUM CHANNEL GAMMA-5 SUBUNIT"/>
    <property type="match status" value="1"/>
</dbReference>
<dbReference type="Pfam" id="PF13903">
    <property type="entry name" value="Claudin_2"/>
    <property type="match status" value="1"/>
</dbReference>
<dbReference type="PRINTS" id="PR01792">
    <property type="entry name" value="VDCCGAMMA"/>
</dbReference>
<dbReference type="PRINTS" id="PR01793">
    <property type="entry name" value="VDCCGAMMA5"/>
</dbReference>
<keyword id="KW-0002">3D-structure</keyword>
<keyword id="KW-1003">Cell membrane</keyword>
<keyword id="KW-0472">Membrane</keyword>
<keyword id="KW-0628">Postsynaptic cell membrane</keyword>
<keyword id="KW-1185">Reference proteome</keyword>
<keyword id="KW-0770">Synapse</keyword>
<keyword id="KW-0812">Transmembrane</keyword>
<keyword id="KW-1133">Transmembrane helix</keyword>
<reference key="1">
    <citation type="journal article" date="2001" name="Gene">
        <title>Calcium channel gamma subunits provide insights into the evolution of this gene family.</title>
        <authorList>
            <person name="Chu P.-J."/>
            <person name="Robertson H.M."/>
            <person name="Best P.M."/>
        </authorList>
    </citation>
    <scope>NUCLEOTIDE SEQUENCE [MRNA]</scope>
    <source>
        <strain>Sprague-Dawley</strain>
    </source>
</reference>
<reference key="2">
    <citation type="journal article" date="2008" name="Neuron">
        <title>AMPA receptor subunit-specific regulation by a distinct family of type II TARPs.</title>
        <authorList>
            <person name="Kato A.S."/>
            <person name="Siuda E.R."/>
            <person name="Nisenbaum E.S."/>
            <person name="Bredt D.S."/>
        </authorList>
    </citation>
    <scope>FUNCTION</scope>
    <scope>SUBCELLULAR LOCATION</scope>
    <scope>INTERACTION WITH GRIA1; GRIA2; GRIA3 AND GRIA4</scope>
</reference>
<reference key="3">
    <citation type="journal article" date="2009" name="Nat. Neurosci.">
        <title>Selective regulation of long-form calcium-permeable AMPA receptors by an atypical TARP, gamma-5.</title>
        <authorList>
            <person name="Soto D."/>
            <person name="Coombs I.D."/>
            <person name="Renzi M."/>
            <person name="Zonouzi M."/>
            <person name="Farrant M."/>
            <person name="Cull-Candy S.G."/>
        </authorList>
    </citation>
    <scope>FUNCTION</scope>
    <scope>INTERACTION WITH GRIA1; GRIA2 AND GRIA4</scope>
</reference>
<reference key="4">
    <citation type="journal article" date="2009" name="Nat. Neurosci.">
        <authorList>
            <person name="Soto D."/>
            <person name="Coombs I.D."/>
            <person name="Renzi M."/>
            <person name="Zonouzi M."/>
            <person name="Farrant M."/>
            <person name="Cull-Candy S.G."/>
        </authorList>
    </citation>
    <scope>ERRATUM OF PUBMED:19234459</scope>
</reference>
<reference key="5">
    <citation type="journal article" date="2009" name="Science">
        <title>Functional proteomics identify cornichon proteins as auxiliary subunits of AMPA receptors.</title>
        <authorList>
            <person name="Schwenk J."/>
            <person name="Harmel N."/>
            <person name="Zolles G."/>
            <person name="Bildl W."/>
            <person name="Kulik A."/>
            <person name="Heimrich B."/>
            <person name="Chisaka O."/>
            <person name="Jonas P."/>
            <person name="Schulte U."/>
            <person name="Fakler B."/>
            <person name="Kloecker N."/>
        </authorList>
    </citation>
    <scope>SUBUNIT</scope>
    <scope>IDENTIFICATION BY MASS SPECTROMETRY</scope>
</reference>
<organism>
    <name type="scientific">Rattus norvegicus</name>
    <name type="common">Rat</name>
    <dbReference type="NCBI Taxonomy" id="10116"/>
    <lineage>
        <taxon>Eukaryota</taxon>
        <taxon>Metazoa</taxon>
        <taxon>Chordata</taxon>
        <taxon>Craniata</taxon>
        <taxon>Vertebrata</taxon>
        <taxon>Euteleostomi</taxon>
        <taxon>Mammalia</taxon>
        <taxon>Eutheria</taxon>
        <taxon>Euarchontoglires</taxon>
        <taxon>Glires</taxon>
        <taxon>Rodentia</taxon>
        <taxon>Myomorpha</taxon>
        <taxon>Muroidea</taxon>
        <taxon>Muridae</taxon>
        <taxon>Murinae</taxon>
        <taxon>Rattus</taxon>
    </lineage>
</organism>
<gene>
    <name type="primary">Cacng5</name>
</gene>
<comment type="function">
    <text evidence="3 4">Regulates the gating properties of AMPA-selective glutamate receptors (AMPARs). Modulates their gating properties by accelerating their rates of activation, deactivation and desensitization. Displays subunit-specific AMPA receptor regulation. Shows specificity for GRIA1, GRIA4 and the long isoform of GRIA2. According to PubMed:18817736, shows only specificity for GRIA2 and specifically to the form of GRIA2 for which a single amino acid in the pore region has been edited from a glutamine to an arginine residue. Thought to stabilize the calcium channel in an inactivated (closed) state.</text>
</comment>
<comment type="subunit">
    <text evidence="3 4 5">The L-type calcium channel is composed of five subunits: alpha-1, alpha-2/delta, beta and gamma. Acts as an auxiliary subunit for AMPA-selective glutamate receptors (AMPARs). Found in a complex with GRIA1, GRIA2, GRIA3, GRIA4, CNIH2, CNIH3, CACNG2, CACNG3, CACNG4, CACNG7 and CACNG8. Interacts with GRIA1, GRIA2, GRIA3 and GRIA4.</text>
</comment>
<comment type="subcellular location">
    <subcellularLocation>
        <location evidence="1">Membrane</location>
        <topology evidence="1">Multi-pass membrane protein</topology>
    </subcellularLocation>
    <subcellularLocation>
        <location evidence="3">Postsynaptic density membrane</location>
    </subcellularLocation>
</comment>
<comment type="similarity">
    <text evidence="6">Belongs to the PMP-22/EMP/MP20 family. CACNG subfamily.</text>
</comment>
<feature type="chain" id="PRO_0000164683" description="Voltage-dependent calcium channel gamma-5 subunit">
    <location>
        <begin position="1"/>
        <end position="275"/>
    </location>
</feature>
<feature type="transmembrane region" description="Helical" evidence="2">
    <location>
        <begin position="8"/>
        <end position="28"/>
    </location>
</feature>
<feature type="transmembrane region" description="Helical" evidence="2">
    <location>
        <begin position="103"/>
        <end position="123"/>
    </location>
</feature>
<feature type="transmembrane region" description="Helical" evidence="2">
    <location>
        <begin position="129"/>
        <end position="149"/>
    </location>
</feature>
<feature type="transmembrane region" description="Helical" evidence="2">
    <location>
        <begin position="181"/>
        <end position="201"/>
    </location>
</feature>
<feature type="helix" evidence="8">
    <location>
        <begin position="6"/>
        <end position="29"/>
    </location>
</feature>
<feature type="strand" evidence="7">
    <location>
        <begin position="33"/>
        <end position="37"/>
    </location>
</feature>
<feature type="strand" evidence="8">
    <location>
        <begin position="38"/>
        <end position="41"/>
    </location>
</feature>
<feature type="helix" evidence="8">
    <location>
        <begin position="44"/>
        <end position="46"/>
    </location>
</feature>
<feature type="strand" evidence="8">
    <location>
        <begin position="48"/>
        <end position="52"/>
    </location>
</feature>
<feature type="strand" evidence="7">
    <location>
        <begin position="54"/>
        <end position="56"/>
    </location>
</feature>
<feature type="strand" evidence="8">
    <location>
        <begin position="58"/>
        <end position="60"/>
    </location>
</feature>
<feature type="strand" evidence="7">
    <location>
        <begin position="65"/>
        <end position="67"/>
    </location>
</feature>
<feature type="strand" evidence="8">
    <location>
        <begin position="74"/>
        <end position="77"/>
    </location>
</feature>
<feature type="helix" evidence="8">
    <location>
        <begin position="93"/>
        <end position="100"/>
    </location>
</feature>
<feature type="helix" evidence="8">
    <location>
        <begin position="102"/>
        <end position="123"/>
    </location>
</feature>
<feature type="strand" evidence="8">
    <location>
        <begin position="126"/>
        <end position="128"/>
    </location>
</feature>
<feature type="helix" evidence="8">
    <location>
        <begin position="129"/>
        <end position="161"/>
    </location>
</feature>
<feature type="strand" evidence="8">
    <location>
        <begin position="169"/>
        <end position="171"/>
    </location>
</feature>
<feature type="strand" evidence="7">
    <location>
        <begin position="172"/>
        <end position="175"/>
    </location>
</feature>
<feature type="helix" evidence="8">
    <location>
        <begin position="177"/>
        <end position="205"/>
    </location>
</feature>
<protein>
    <recommendedName>
        <fullName>Voltage-dependent calcium channel gamma-5 subunit</fullName>
    </recommendedName>
    <alternativeName>
        <fullName>Neuronal voltage-gated calcium channel gamma-5 subunit</fullName>
    </alternativeName>
    <alternativeName>
        <fullName>Transmembrane AMPAR regulatory protein gamma-5</fullName>
        <shortName>TARP gamma-5</shortName>
    </alternativeName>
</protein>
<evidence type="ECO:0000250" key="1"/>
<evidence type="ECO:0000255" key="2"/>
<evidence type="ECO:0000269" key="3">
    <source>
    </source>
</evidence>
<evidence type="ECO:0000269" key="4">
    <source>
    </source>
</evidence>
<evidence type="ECO:0000269" key="5">
    <source>
    </source>
</evidence>
<evidence type="ECO:0000305" key="6"/>
<evidence type="ECO:0007829" key="7">
    <source>
        <dbReference type="PDB" id="8SS7"/>
    </source>
</evidence>
<evidence type="ECO:0007829" key="8">
    <source>
        <dbReference type="PDB" id="8SS9"/>
    </source>
</evidence>
<proteinExistence type="evidence at protein level"/>
<sequence length="275" mass="30924">MSTCGRKALTLLSSVFAVCGLGLLGIAVSTDYWLYLEEGIILPQNQSTEVKMSLHSGLWRVCFLAGEERGRCFTIEYVMPMNSQMTSESTVNVLKMIRSATPFPLVSLFFMFIGFILSNIGHIRPHRTILAFVSGIFFILSGLSLVVGLVLYISSINDEMLNRTKDAETYFNYKYGWSFAFAAISFLLTESAGVMSVYLFMKRYTAEDMYRPHPGFYRPRLSNCSDYSGQFLHPDAWIRGRSPSDISSDASLQMNSNYPALLKCPDYDQMSSSPC</sequence>
<accession>Q8VHW8</accession>
<name>CCG5_RAT</name>